<comment type="function">
    <text evidence="1">Required for the insertion and/or proper folding and/or complex formation of integral membrane proteins into the membrane. Involved in integration of membrane proteins that insert both dependently and independently of the Sec translocase complex, as well as at least some lipoproteins. Aids folding of multispanning membrane proteins.</text>
</comment>
<comment type="subunit">
    <text evidence="1">Interacts with the Sec translocase complex via SecD. Specifically interacts with transmembrane segments of nascent integral membrane proteins during membrane integration.</text>
</comment>
<comment type="subcellular location">
    <subcellularLocation>
        <location evidence="1">Cell inner membrane</location>
        <topology evidence="1">Multi-pass membrane protein</topology>
    </subcellularLocation>
</comment>
<comment type="similarity">
    <text evidence="1">Belongs to the OXA1/ALB3/YidC family. Type 1 subfamily.</text>
</comment>
<dbReference type="EMBL" id="CP000436">
    <property type="protein sequence ID" value="ABI24411.1"/>
    <property type="molecule type" value="Genomic_DNA"/>
</dbReference>
<dbReference type="SMR" id="Q0I0Z1"/>
<dbReference type="KEGG" id="hso:HS_0133"/>
<dbReference type="eggNOG" id="COG0706">
    <property type="taxonomic scope" value="Bacteria"/>
</dbReference>
<dbReference type="HOGENOM" id="CLU_016535_3_0_6"/>
<dbReference type="GO" id="GO:0005886">
    <property type="term" value="C:plasma membrane"/>
    <property type="evidence" value="ECO:0007669"/>
    <property type="project" value="UniProtKB-SubCell"/>
</dbReference>
<dbReference type="GO" id="GO:0032977">
    <property type="term" value="F:membrane insertase activity"/>
    <property type="evidence" value="ECO:0007669"/>
    <property type="project" value="InterPro"/>
</dbReference>
<dbReference type="GO" id="GO:0051205">
    <property type="term" value="P:protein insertion into membrane"/>
    <property type="evidence" value="ECO:0007669"/>
    <property type="project" value="TreeGrafter"/>
</dbReference>
<dbReference type="GO" id="GO:0015031">
    <property type="term" value="P:protein transport"/>
    <property type="evidence" value="ECO:0007669"/>
    <property type="project" value="UniProtKB-KW"/>
</dbReference>
<dbReference type="CDD" id="cd20070">
    <property type="entry name" value="5TM_YidC_Alb3"/>
    <property type="match status" value="1"/>
</dbReference>
<dbReference type="CDD" id="cd19961">
    <property type="entry name" value="EcYidC-like_peri"/>
    <property type="match status" value="1"/>
</dbReference>
<dbReference type="Gene3D" id="2.70.98.90">
    <property type="match status" value="1"/>
</dbReference>
<dbReference type="HAMAP" id="MF_01810">
    <property type="entry name" value="YidC_type1"/>
    <property type="match status" value="1"/>
</dbReference>
<dbReference type="InterPro" id="IPR019998">
    <property type="entry name" value="Membr_insert_YidC"/>
</dbReference>
<dbReference type="InterPro" id="IPR028053">
    <property type="entry name" value="Membr_insert_YidC_N"/>
</dbReference>
<dbReference type="InterPro" id="IPR001708">
    <property type="entry name" value="YidC/ALB3/OXA1/COX18"/>
</dbReference>
<dbReference type="InterPro" id="IPR028055">
    <property type="entry name" value="YidC/Oxa/ALB_C"/>
</dbReference>
<dbReference type="InterPro" id="IPR047196">
    <property type="entry name" value="YidC_ALB_C"/>
</dbReference>
<dbReference type="InterPro" id="IPR038221">
    <property type="entry name" value="YidC_periplasmic_sf"/>
</dbReference>
<dbReference type="NCBIfam" id="NF002351">
    <property type="entry name" value="PRK01318.1-1"/>
    <property type="match status" value="1"/>
</dbReference>
<dbReference type="NCBIfam" id="NF002352">
    <property type="entry name" value="PRK01318.1-3"/>
    <property type="match status" value="1"/>
</dbReference>
<dbReference type="NCBIfam" id="TIGR03593">
    <property type="entry name" value="yidC_nterm"/>
    <property type="match status" value="1"/>
</dbReference>
<dbReference type="NCBIfam" id="TIGR03592">
    <property type="entry name" value="yidC_oxa1_cterm"/>
    <property type="match status" value="1"/>
</dbReference>
<dbReference type="PANTHER" id="PTHR12428:SF65">
    <property type="entry name" value="CYTOCHROME C OXIDASE ASSEMBLY PROTEIN COX18, MITOCHONDRIAL"/>
    <property type="match status" value="1"/>
</dbReference>
<dbReference type="PANTHER" id="PTHR12428">
    <property type="entry name" value="OXA1"/>
    <property type="match status" value="1"/>
</dbReference>
<dbReference type="Pfam" id="PF02096">
    <property type="entry name" value="60KD_IMP"/>
    <property type="match status" value="1"/>
</dbReference>
<dbReference type="Pfam" id="PF14849">
    <property type="entry name" value="YidC_periplas"/>
    <property type="match status" value="1"/>
</dbReference>
<dbReference type="PRINTS" id="PR00701">
    <property type="entry name" value="60KDINNERMP"/>
</dbReference>
<dbReference type="PRINTS" id="PR01900">
    <property type="entry name" value="YIDCPROTEIN"/>
</dbReference>
<accession>Q0I0Z1</accession>
<protein>
    <recommendedName>
        <fullName evidence="1">Membrane protein insertase YidC</fullName>
    </recommendedName>
    <alternativeName>
        <fullName evidence="1">Foldase YidC</fullName>
    </alternativeName>
    <alternativeName>
        <fullName evidence="1">Membrane integrase YidC</fullName>
    </alternativeName>
    <alternativeName>
        <fullName evidence="1">Membrane protein YidC</fullName>
    </alternativeName>
</protein>
<evidence type="ECO:0000255" key="1">
    <source>
        <dbReference type="HAMAP-Rule" id="MF_01810"/>
    </source>
</evidence>
<sequence>MDSKRSLLFMALLFISFLIYQQWQVDYNTPKPEMTEQAQVSEVNSTALTATSDIANDTQAKGRVITLENDVFRLKVNTLGGDVIGSELLNYDAELHSSAPFVLLQNNADKVYIAQSGLVGKNGIDSRAGRANYQVEGDVFKLAEGQQELKVPLVFEKDGVIYRKVFVLKPGSYALEVNFEITNQSPKPIEVVPYAQLTHTLVESSGSMAMPTYTGGAYSSSETNYKKYSFEDMEKADLDIHTKAGWVALLQHYFVSAWIPNQDANNTLYTLTNTKKHLGSIGYRSAPIVIENGATETIHTQLWTGPKLQDQMADVANHLDLTVDYGWAWFIAKPLFKLLTLIQSLVQNWGLAIIGVTLVVKAILYPLTKAQYTSMAKMRMLQPKLQEMRERFGEDRQRMSQEMMKLYKEEKVNPLGGCLPILLQMPIFIALYWTFMEAVELRHAPFFGWVQDLSAQDPYFILPILMGASMFLLQKMSPTPVADPMQQKVMTFMPLIFMVFFLFFPAGLVLYWLASNLITIAQQWLIYRGLEKKGLHTRVKK</sequence>
<feature type="chain" id="PRO_1000070105" description="Membrane protein insertase YidC">
    <location>
        <begin position="1"/>
        <end position="541"/>
    </location>
</feature>
<feature type="transmembrane region" description="Helical" evidence="1">
    <location>
        <begin position="7"/>
        <end position="27"/>
    </location>
</feature>
<feature type="transmembrane region" description="Helical" evidence="1">
    <location>
        <begin position="345"/>
        <end position="365"/>
    </location>
</feature>
<feature type="transmembrane region" description="Helical" evidence="1">
    <location>
        <begin position="415"/>
        <end position="435"/>
    </location>
</feature>
<feature type="transmembrane region" description="Helical" evidence="1">
    <location>
        <begin position="453"/>
        <end position="473"/>
    </location>
</feature>
<feature type="transmembrane region" description="Helical" evidence="1">
    <location>
        <begin position="492"/>
        <end position="512"/>
    </location>
</feature>
<gene>
    <name evidence="1" type="primary">yidC</name>
    <name type="ordered locus">HS_0133</name>
</gene>
<name>YIDC_HISS1</name>
<keyword id="KW-0997">Cell inner membrane</keyword>
<keyword id="KW-1003">Cell membrane</keyword>
<keyword id="KW-0143">Chaperone</keyword>
<keyword id="KW-0472">Membrane</keyword>
<keyword id="KW-0653">Protein transport</keyword>
<keyword id="KW-0812">Transmembrane</keyword>
<keyword id="KW-1133">Transmembrane helix</keyword>
<keyword id="KW-0813">Transport</keyword>
<reference key="1">
    <citation type="journal article" date="2007" name="J. Bacteriol.">
        <title>Complete genome sequence of Haemophilus somnus (Histophilus somni) strain 129Pt and comparison to Haemophilus ducreyi 35000HP and Haemophilus influenzae Rd.</title>
        <authorList>
            <person name="Challacombe J.F."/>
            <person name="Duncan A.J."/>
            <person name="Brettin T.S."/>
            <person name="Bruce D."/>
            <person name="Chertkov O."/>
            <person name="Detter J.C."/>
            <person name="Han C.S."/>
            <person name="Misra M."/>
            <person name="Richardson P."/>
            <person name="Tapia R."/>
            <person name="Thayer N."/>
            <person name="Xie G."/>
            <person name="Inzana T.J."/>
        </authorList>
    </citation>
    <scope>NUCLEOTIDE SEQUENCE [LARGE SCALE GENOMIC DNA]</scope>
    <source>
        <strain>129Pt</strain>
    </source>
</reference>
<organism>
    <name type="scientific">Histophilus somni (strain 129Pt)</name>
    <name type="common">Haemophilus somnus</name>
    <dbReference type="NCBI Taxonomy" id="205914"/>
    <lineage>
        <taxon>Bacteria</taxon>
        <taxon>Pseudomonadati</taxon>
        <taxon>Pseudomonadota</taxon>
        <taxon>Gammaproteobacteria</taxon>
        <taxon>Pasteurellales</taxon>
        <taxon>Pasteurellaceae</taxon>
        <taxon>Histophilus</taxon>
    </lineage>
</organism>
<proteinExistence type="inferred from homology"/>